<dbReference type="EMBL" id="CP000099">
    <property type="protein sequence ID" value="AAZ69094.1"/>
    <property type="molecule type" value="Genomic_DNA"/>
</dbReference>
<dbReference type="SMR" id="Q46G98"/>
<dbReference type="STRING" id="269797.Mbar_A0107"/>
<dbReference type="PaxDb" id="269797-Mbar_A0107"/>
<dbReference type="KEGG" id="mba:Mbar_A0107"/>
<dbReference type="eggNOG" id="arCOG04067">
    <property type="taxonomic scope" value="Archaea"/>
</dbReference>
<dbReference type="HOGENOM" id="CLU_036235_0_3_2"/>
<dbReference type="OrthoDB" id="5987at2157"/>
<dbReference type="GO" id="GO:0022625">
    <property type="term" value="C:cytosolic large ribosomal subunit"/>
    <property type="evidence" value="ECO:0007669"/>
    <property type="project" value="TreeGrafter"/>
</dbReference>
<dbReference type="GO" id="GO:0019843">
    <property type="term" value="F:rRNA binding"/>
    <property type="evidence" value="ECO:0007669"/>
    <property type="project" value="UniProtKB-UniRule"/>
</dbReference>
<dbReference type="GO" id="GO:0003735">
    <property type="term" value="F:structural constituent of ribosome"/>
    <property type="evidence" value="ECO:0007669"/>
    <property type="project" value="InterPro"/>
</dbReference>
<dbReference type="GO" id="GO:0002181">
    <property type="term" value="P:cytoplasmic translation"/>
    <property type="evidence" value="ECO:0007669"/>
    <property type="project" value="TreeGrafter"/>
</dbReference>
<dbReference type="FunFam" id="2.40.50.140:FF:000020">
    <property type="entry name" value="60S ribosomal protein L2"/>
    <property type="match status" value="1"/>
</dbReference>
<dbReference type="FunFam" id="4.10.950.10:FF:000002">
    <property type="entry name" value="60S ribosomal protein L2"/>
    <property type="match status" value="1"/>
</dbReference>
<dbReference type="FunFam" id="2.30.30.30:FF:000006">
    <property type="entry name" value="60S ribosomal protein L8"/>
    <property type="match status" value="1"/>
</dbReference>
<dbReference type="Gene3D" id="2.30.30.30">
    <property type="match status" value="1"/>
</dbReference>
<dbReference type="Gene3D" id="2.40.50.140">
    <property type="entry name" value="Nucleic acid-binding proteins"/>
    <property type="match status" value="1"/>
</dbReference>
<dbReference type="Gene3D" id="4.10.950.10">
    <property type="entry name" value="Ribosomal protein L2, domain 3"/>
    <property type="match status" value="1"/>
</dbReference>
<dbReference type="HAMAP" id="MF_01320_A">
    <property type="entry name" value="Ribosomal_uL2_A"/>
    <property type="match status" value="1"/>
</dbReference>
<dbReference type="InterPro" id="IPR012340">
    <property type="entry name" value="NA-bd_OB-fold"/>
</dbReference>
<dbReference type="InterPro" id="IPR014722">
    <property type="entry name" value="Rib_uL2_dom2"/>
</dbReference>
<dbReference type="InterPro" id="IPR002171">
    <property type="entry name" value="Ribosomal_uL2"/>
</dbReference>
<dbReference type="InterPro" id="IPR023672">
    <property type="entry name" value="Ribosomal_uL2_arc_euk"/>
</dbReference>
<dbReference type="InterPro" id="IPR022669">
    <property type="entry name" value="Ribosomal_uL2_C"/>
</dbReference>
<dbReference type="InterPro" id="IPR014726">
    <property type="entry name" value="Ribosomal_uL2_dom3"/>
</dbReference>
<dbReference type="InterPro" id="IPR022666">
    <property type="entry name" value="Ribosomal_uL2_RNA-bd_dom"/>
</dbReference>
<dbReference type="InterPro" id="IPR008991">
    <property type="entry name" value="Translation_prot_SH3-like_sf"/>
</dbReference>
<dbReference type="NCBIfam" id="NF007180">
    <property type="entry name" value="PRK09612.1"/>
    <property type="match status" value="1"/>
</dbReference>
<dbReference type="PANTHER" id="PTHR13691:SF16">
    <property type="entry name" value="LARGE RIBOSOMAL SUBUNIT PROTEIN UL2"/>
    <property type="match status" value="1"/>
</dbReference>
<dbReference type="PANTHER" id="PTHR13691">
    <property type="entry name" value="RIBOSOMAL PROTEIN L2"/>
    <property type="match status" value="1"/>
</dbReference>
<dbReference type="Pfam" id="PF00181">
    <property type="entry name" value="Ribosomal_L2"/>
    <property type="match status" value="1"/>
</dbReference>
<dbReference type="Pfam" id="PF03947">
    <property type="entry name" value="Ribosomal_L2_C"/>
    <property type="match status" value="1"/>
</dbReference>
<dbReference type="PIRSF" id="PIRSF002158">
    <property type="entry name" value="Ribosomal_L2"/>
    <property type="match status" value="1"/>
</dbReference>
<dbReference type="SMART" id="SM01383">
    <property type="entry name" value="Ribosomal_L2"/>
    <property type="match status" value="1"/>
</dbReference>
<dbReference type="SMART" id="SM01382">
    <property type="entry name" value="Ribosomal_L2_C"/>
    <property type="match status" value="1"/>
</dbReference>
<dbReference type="SUPFAM" id="SSF50249">
    <property type="entry name" value="Nucleic acid-binding proteins"/>
    <property type="match status" value="1"/>
</dbReference>
<dbReference type="SUPFAM" id="SSF50104">
    <property type="entry name" value="Translation proteins SH3-like domain"/>
    <property type="match status" value="1"/>
</dbReference>
<name>RL2_METBF</name>
<keyword id="KW-0687">Ribonucleoprotein</keyword>
<keyword id="KW-0689">Ribosomal protein</keyword>
<keyword id="KW-0694">RNA-binding</keyword>
<keyword id="KW-0699">rRNA-binding</keyword>
<protein>
    <recommendedName>
        <fullName evidence="1">Large ribosomal subunit protein uL2</fullName>
    </recommendedName>
    <alternativeName>
        <fullName evidence="3">50S ribosomal protein L2</fullName>
    </alternativeName>
</protein>
<organism>
    <name type="scientific">Methanosarcina barkeri (strain Fusaro / DSM 804)</name>
    <dbReference type="NCBI Taxonomy" id="269797"/>
    <lineage>
        <taxon>Archaea</taxon>
        <taxon>Methanobacteriati</taxon>
        <taxon>Methanobacteriota</taxon>
        <taxon>Stenosarchaea group</taxon>
        <taxon>Methanomicrobia</taxon>
        <taxon>Methanosarcinales</taxon>
        <taxon>Methanosarcinaceae</taxon>
        <taxon>Methanosarcina</taxon>
    </lineage>
</organism>
<evidence type="ECO:0000255" key="1">
    <source>
        <dbReference type="HAMAP-Rule" id="MF_01320"/>
    </source>
</evidence>
<evidence type="ECO:0000256" key="2">
    <source>
        <dbReference type="SAM" id="MobiDB-lite"/>
    </source>
</evidence>
<evidence type="ECO:0000305" key="3"/>
<gene>
    <name evidence="1" type="primary">rpl2</name>
    <name type="ordered locus">Mbar_A0107</name>
</gene>
<accession>Q46G98</accession>
<comment type="function">
    <text evidence="1">One of the primary rRNA binding proteins. Required for association of the 30S and 50S subunits to form the 70S ribosome, for tRNA binding and peptide bond formation. It has been suggested to have peptidyltransferase activity; this is somewhat controversial. Makes several contacts with the 16S rRNA in the 70S ribosome.</text>
</comment>
<comment type="subunit">
    <text evidence="1">Part of the 50S ribosomal subunit. Forms a bridge to the 30S subunit in the 70S ribosome.</text>
</comment>
<comment type="similarity">
    <text evidence="1">Belongs to the universal ribosomal protein uL2 family.</text>
</comment>
<reference key="1">
    <citation type="journal article" date="2006" name="J. Bacteriol.">
        <title>The Methanosarcina barkeri genome: comparative analysis with Methanosarcina acetivorans and Methanosarcina mazei reveals extensive rearrangement within methanosarcinal genomes.</title>
        <authorList>
            <person name="Maeder D.L."/>
            <person name="Anderson I."/>
            <person name="Brettin T.S."/>
            <person name="Bruce D.C."/>
            <person name="Gilna P."/>
            <person name="Han C.S."/>
            <person name="Lapidus A."/>
            <person name="Metcalf W.W."/>
            <person name="Saunders E."/>
            <person name="Tapia R."/>
            <person name="Sowers K.R."/>
        </authorList>
    </citation>
    <scope>NUCLEOTIDE SEQUENCE [LARGE SCALE GENOMIC DNA]</scope>
    <source>
        <strain>Fusaro / DSM 804</strain>
    </source>
</reference>
<feature type="chain" id="PRO_0000237290" description="Large ribosomal subunit protein uL2">
    <location>
        <begin position="1"/>
        <end position="238"/>
    </location>
</feature>
<feature type="region of interest" description="Disordered" evidence="2">
    <location>
        <begin position="203"/>
        <end position="223"/>
    </location>
</feature>
<sequence length="238" mass="25729">MGKRIISQNRGRGTPTYRAPSHKYKAELRHPRVDENTSIQGKVINLEHDPARSAPIAKVVFETGEERLLLASEGIAVGSTIECGDDADVRPGNIVPIGKVPEGFFICNIESKPNDGGRFVRSSGVYATVVTHESNRTAVAMPSGNIKWLNPKCRAVVGIVAGGGRVDRPWLKAGKKYHKMKTRAAKYPRVSGVAMNPVDHPFGGGAWKHPGKPTTVSRNAPPGRKVGLIAARRTGMKR</sequence>
<proteinExistence type="inferred from homology"/>